<reference key="1">
    <citation type="journal article" date="2003" name="Science">
        <title>A genomic view of the human-Bacteroides thetaiotaomicron symbiosis.</title>
        <authorList>
            <person name="Xu J."/>
            <person name="Bjursell M.K."/>
            <person name="Himrod J."/>
            <person name="Deng S."/>
            <person name="Carmichael L.K."/>
            <person name="Chiang H.C."/>
            <person name="Hooper L.V."/>
            <person name="Gordon J.I."/>
        </authorList>
    </citation>
    <scope>NUCLEOTIDE SEQUENCE [LARGE SCALE GENOMIC DNA]</scope>
    <source>
        <strain>ATCC 29148 / DSM 2079 / JCM 5827 / CCUG 10774 / NCTC 10582 / VPI-5482 / E50</strain>
    </source>
</reference>
<gene>
    <name evidence="1" type="primary">nhaA</name>
    <name type="ordered locus">BT_0634</name>
</gene>
<keyword id="KW-0050">Antiport</keyword>
<keyword id="KW-0997">Cell inner membrane</keyword>
<keyword id="KW-1003">Cell membrane</keyword>
<keyword id="KW-0406">Ion transport</keyword>
<keyword id="KW-0472">Membrane</keyword>
<keyword id="KW-1185">Reference proteome</keyword>
<keyword id="KW-0915">Sodium</keyword>
<keyword id="KW-0739">Sodium transport</keyword>
<keyword id="KW-0812">Transmembrane</keyword>
<keyword id="KW-1133">Transmembrane helix</keyword>
<keyword id="KW-0813">Transport</keyword>
<name>NHAA_BACTN</name>
<sequence length="439" mass="47172">MTILRTMRNFSSMNIAASILLFVAAIAAAIIANSPVAPVYQEFLLHELHLQIGNFNLLSHGGENLRMIEFINDGLMTIFFLLVGLEIKRELLVGELSSFRKAALPFIAACGGMLFPVIVYMSICPPGSAGSQGLAIPMATDIAFSLGVLSLLGSRVPLSLKIFLTAFAVVDDIGGILVIALFYSSHVSYGYILIAALLYVLLYFIGKRGTTNKIFFLVIGVVIWYLFLQSGIHSTISGVILAFVIPAKPRLDVGKYIEHIRHTIAGFPVVESGSIVLTNEQIAKLKEVESASDRVISPLQSLEDNLHGAVNYLILPLFAFVNAGVVFSGGGELVGSVGMAVAAGLLFGKFAGIYFFTWLAIKIKLTPMPPGMTWKNLSGIALLGGIGFTVSLFIANLSFGANYPVLLNQAKFGVLSGTILSGLLGYIVLRIVLPVRKRK</sequence>
<evidence type="ECO:0000255" key="1">
    <source>
        <dbReference type="HAMAP-Rule" id="MF_01844"/>
    </source>
</evidence>
<dbReference type="EMBL" id="AE015928">
    <property type="protein sequence ID" value="AAO75741.1"/>
    <property type="molecule type" value="Genomic_DNA"/>
</dbReference>
<dbReference type="RefSeq" id="NP_809547.1">
    <property type="nucleotide sequence ID" value="NC_004663.1"/>
</dbReference>
<dbReference type="RefSeq" id="WP_011107366.1">
    <property type="nucleotide sequence ID" value="NC_004663.1"/>
</dbReference>
<dbReference type="SMR" id="Q8AA31"/>
<dbReference type="FunCoup" id="Q8AA31">
    <property type="interactions" value="68"/>
</dbReference>
<dbReference type="STRING" id="226186.BT_0634"/>
<dbReference type="PaxDb" id="226186-BT_0634"/>
<dbReference type="EnsemblBacteria" id="AAO75741">
    <property type="protein sequence ID" value="AAO75741"/>
    <property type="gene ID" value="BT_0634"/>
</dbReference>
<dbReference type="GeneID" id="60926595"/>
<dbReference type="KEGG" id="bth:BT_0634"/>
<dbReference type="PATRIC" id="fig|226186.12.peg.645"/>
<dbReference type="eggNOG" id="COG3004">
    <property type="taxonomic scope" value="Bacteria"/>
</dbReference>
<dbReference type="HOGENOM" id="CLU_015803_1_2_10"/>
<dbReference type="InParanoid" id="Q8AA31"/>
<dbReference type="OrthoDB" id="9808135at2"/>
<dbReference type="Proteomes" id="UP000001414">
    <property type="component" value="Chromosome"/>
</dbReference>
<dbReference type="GO" id="GO:0005886">
    <property type="term" value="C:plasma membrane"/>
    <property type="evidence" value="ECO:0000318"/>
    <property type="project" value="GO_Central"/>
</dbReference>
<dbReference type="GO" id="GO:0015385">
    <property type="term" value="F:sodium:proton antiporter activity"/>
    <property type="evidence" value="ECO:0000318"/>
    <property type="project" value="GO_Central"/>
</dbReference>
<dbReference type="GO" id="GO:0006885">
    <property type="term" value="P:regulation of pH"/>
    <property type="evidence" value="ECO:0007669"/>
    <property type="project" value="InterPro"/>
</dbReference>
<dbReference type="Gene3D" id="1.20.1530.10">
    <property type="entry name" value="Na+/H+ antiporter like domain"/>
    <property type="match status" value="1"/>
</dbReference>
<dbReference type="HAMAP" id="MF_01844">
    <property type="entry name" value="NhaA"/>
    <property type="match status" value="1"/>
</dbReference>
<dbReference type="InterPro" id="IPR023171">
    <property type="entry name" value="Na/H_antiporter_dom_sf"/>
</dbReference>
<dbReference type="InterPro" id="IPR004670">
    <property type="entry name" value="NhaA"/>
</dbReference>
<dbReference type="NCBIfam" id="TIGR00773">
    <property type="entry name" value="NhaA"/>
    <property type="match status" value="1"/>
</dbReference>
<dbReference type="PANTHER" id="PTHR30341:SF0">
    <property type="entry name" value="NA(+)_H(+) ANTIPORTER NHAA"/>
    <property type="match status" value="1"/>
</dbReference>
<dbReference type="PANTHER" id="PTHR30341">
    <property type="entry name" value="SODIUM ION/PROTON ANTIPORTER NHAA-RELATED"/>
    <property type="match status" value="1"/>
</dbReference>
<dbReference type="Pfam" id="PF06965">
    <property type="entry name" value="Na_H_antiport_1"/>
    <property type="match status" value="1"/>
</dbReference>
<feature type="chain" id="PRO_0000334233" description="Na(+)/H(+) antiporter NhaA">
    <location>
        <begin position="1"/>
        <end position="439"/>
    </location>
</feature>
<feature type="transmembrane region" description="Helical" evidence="1">
    <location>
        <begin position="12"/>
        <end position="32"/>
    </location>
</feature>
<feature type="transmembrane region" description="Helical" evidence="1">
    <location>
        <begin position="67"/>
        <end position="87"/>
    </location>
</feature>
<feature type="transmembrane region" description="Helical" evidence="1">
    <location>
        <begin position="103"/>
        <end position="123"/>
    </location>
</feature>
<feature type="transmembrane region" description="Helical" evidence="1">
    <location>
        <begin position="133"/>
        <end position="153"/>
    </location>
</feature>
<feature type="transmembrane region" description="Helical" evidence="1">
    <location>
        <begin position="162"/>
        <end position="182"/>
    </location>
</feature>
<feature type="transmembrane region" description="Helical" evidence="1">
    <location>
        <begin position="186"/>
        <end position="206"/>
    </location>
</feature>
<feature type="transmembrane region" description="Helical" evidence="1">
    <location>
        <begin position="214"/>
        <end position="234"/>
    </location>
</feature>
<feature type="transmembrane region" description="Helical" evidence="1">
    <location>
        <begin position="314"/>
        <end position="334"/>
    </location>
</feature>
<feature type="transmembrane region" description="Helical" evidence="1">
    <location>
        <begin position="341"/>
        <end position="361"/>
    </location>
</feature>
<feature type="transmembrane region" description="Helical" evidence="1">
    <location>
        <begin position="379"/>
        <end position="399"/>
    </location>
</feature>
<feature type="transmembrane region" description="Helical" evidence="1">
    <location>
        <begin position="412"/>
        <end position="432"/>
    </location>
</feature>
<protein>
    <recommendedName>
        <fullName evidence="1">Na(+)/H(+) antiporter NhaA</fullName>
    </recommendedName>
    <alternativeName>
        <fullName evidence="1">Sodium/proton antiporter NhaA</fullName>
    </alternativeName>
</protein>
<organism>
    <name type="scientific">Bacteroides thetaiotaomicron (strain ATCC 29148 / DSM 2079 / JCM 5827 / CCUG 10774 / NCTC 10582 / VPI-5482 / E50)</name>
    <dbReference type="NCBI Taxonomy" id="226186"/>
    <lineage>
        <taxon>Bacteria</taxon>
        <taxon>Pseudomonadati</taxon>
        <taxon>Bacteroidota</taxon>
        <taxon>Bacteroidia</taxon>
        <taxon>Bacteroidales</taxon>
        <taxon>Bacteroidaceae</taxon>
        <taxon>Bacteroides</taxon>
    </lineage>
</organism>
<accession>Q8AA31</accession>
<comment type="function">
    <text evidence="1">Na(+)/H(+) antiporter that extrudes sodium in exchange for external protons.</text>
</comment>
<comment type="catalytic activity">
    <reaction evidence="1">
        <text>Na(+)(in) + 2 H(+)(out) = Na(+)(out) + 2 H(+)(in)</text>
        <dbReference type="Rhea" id="RHEA:29251"/>
        <dbReference type="ChEBI" id="CHEBI:15378"/>
        <dbReference type="ChEBI" id="CHEBI:29101"/>
    </reaction>
    <physiologicalReaction direction="left-to-right" evidence="1">
        <dbReference type="Rhea" id="RHEA:29252"/>
    </physiologicalReaction>
</comment>
<comment type="subcellular location">
    <subcellularLocation>
        <location evidence="1">Cell inner membrane</location>
        <topology evidence="1">Multi-pass membrane protein</topology>
    </subcellularLocation>
</comment>
<comment type="similarity">
    <text evidence="1">Belongs to the NhaA Na(+)/H(+) (TC 2.A.33) antiporter family.</text>
</comment>
<proteinExistence type="inferred from homology"/>